<dbReference type="EMBL" id="M26679">
    <property type="protein sequence ID" value="AAA58663.1"/>
    <property type="molecule type" value="Genomic_DNA"/>
</dbReference>
<dbReference type="EMBL" id="BT009744">
    <property type="protein sequence ID" value="AAP88746.1"/>
    <property type="molecule type" value="mRNA"/>
</dbReference>
<dbReference type="EMBL" id="CR542256">
    <property type="protein sequence ID" value="CAG47052.1"/>
    <property type="molecule type" value="mRNA"/>
</dbReference>
<dbReference type="EMBL" id="AC004080">
    <property type="status" value="NOT_ANNOTATED_CDS"/>
    <property type="molecule type" value="Genomic_DNA"/>
</dbReference>
<dbReference type="EMBL" id="CH236948">
    <property type="protein sequence ID" value="EAL24223.1"/>
    <property type="molecule type" value="Genomic_DNA"/>
</dbReference>
<dbReference type="EMBL" id="CH471073">
    <property type="protein sequence ID" value="EAW93873.1"/>
    <property type="molecule type" value="Genomic_DNA"/>
</dbReference>
<dbReference type="EMBL" id="BC013682">
    <property type="protein sequence ID" value="AAH13682.1"/>
    <property type="molecule type" value="mRNA"/>
</dbReference>
<dbReference type="CCDS" id="CCDS5406.1"/>
<dbReference type="PIR" id="A24777">
    <property type="entry name" value="A24777"/>
</dbReference>
<dbReference type="PIR" id="A32799">
    <property type="entry name" value="WJHU1C"/>
</dbReference>
<dbReference type="RefSeq" id="NP_061975.2">
    <property type="nucleotide sequence ID" value="NM_019102.3"/>
</dbReference>
<dbReference type="SMR" id="P20719"/>
<dbReference type="BioGRID" id="109442">
    <property type="interactions" value="85"/>
</dbReference>
<dbReference type="FunCoup" id="P20719">
    <property type="interactions" value="1092"/>
</dbReference>
<dbReference type="IntAct" id="P20719">
    <property type="interactions" value="50"/>
</dbReference>
<dbReference type="MINT" id="P20719"/>
<dbReference type="STRING" id="9606.ENSP00000222726"/>
<dbReference type="GlyGen" id="P20719">
    <property type="glycosylation" value="3 sites, 1 N-linked glycan (1 site), 1 O-linked glycan (2 sites)"/>
</dbReference>
<dbReference type="iPTMnet" id="P20719"/>
<dbReference type="PhosphoSitePlus" id="P20719"/>
<dbReference type="BioMuta" id="HOXA5"/>
<dbReference type="DMDM" id="52788238"/>
<dbReference type="jPOST" id="P20719"/>
<dbReference type="MassIVE" id="P20719"/>
<dbReference type="PaxDb" id="9606-ENSP00000222726"/>
<dbReference type="PeptideAtlas" id="P20719"/>
<dbReference type="ProteomicsDB" id="53780"/>
<dbReference type="Pumba" id="P20719"/>
<dbReference type="Antibodypedia" id="25931">
    <property type="antibodies" value="471 antibodies from 32 providers"/>
</dbReference>
<dbReference type="DNASU" id="3202"/>
<dbReference type="Ensembl" id="ENST00000222726.4">
    <property type="protein sequence ID" value="ENSP00000222726.3"/>
    <property type="gene ID" value="ENSG00000106004.5"/>
</dbReference>
<dbReference type="GeneID" id="3202"/>
<dbReference type="KEGG" id="hsa:3202"/>
<dbReference type="MANE-Select" id="ENST00000222726.4">
    <property type="protein sequence ID" value="ENSP00000222726.3"/>
    <property type="RefSeq nucleotide sequence ID" value="NM_019102.4"/>
    <property type="RefSeq protein sequence ID" value="NP_061975.2"/>
</dbReference>
<dbReference type="UCSC" id="uc003syn.2">
    <property type="organism name" value="human"/>
</dbReference>
<dbReference type="AGR" id="HGNC:5106"/>
<dbReference type="CTD" id="3202"/>
<dbReference type="DisGeNET" id="3202"/>
<dbReference type="GeneCards" id="HOXA5"/>
<dbReference type="HGNC" id="HGNC:5106">
    <property type="gene designation" value="HOXA5"/>
</dbReference>
<dbReference type="HPA" id="ENSG00000106004">
    <property type="expression patterns" value="Tissue enhanced (adrenal gland, epididymis, fallopian tube)"/>
</dbReference>
<dbReference type="MIM" id="142952">
    <property type="type" value="gene"/>
</dbReference>
<dbReference type="neXtProt" id="NX_P20719"/>
<dbReference type="OpenTargets" id="ENSG00000106004"/>
<dbReference type="PharmGKB" id="PA29383"/>
<dbReference type="VEuPathDB" id="HostDB:ENSG00000106004"/>
<dbReference type="eggNOG" id="KOG0489">
    <property type="taxonomic scope" value="Eukaryota"/>
</dbReference>
<dbReference type="GeneTree" id="ENSGT00940000159894"/>
<dbReference type="HOGENOM" id="CLU_061398_2_0_1"/>
<dbReference type="InParanoid" id="P20719"/>
<dbReference type="OMA" id="HNYGEHN"/>
<dbReference type="OrthoDB" id="6159439at2759"/>
<dbReference type="PAN-GO" id="P20719">
    <property type="GO annotations" value="5 GO annotations based on evolutionary models"/>
</dbReference>
<dbReference type="PhylomeDB" id="P20719"/>
<dbReference type="TreeFam" id="TF316310"/>
<dbReference type="PathwayCommons" id="P20719"/>
<dbReference type="SignaLink" id="P20719"/>
<dbReference type="SIGNOR" id="P20719"/>
<dbReference type="BioGRID-ORCS" id="3202">
    <property type="hits" value="20 hits in 1175 CRISPR screens"/>
</dbReference>
<dbReference type="GeneWiki" id="HOXA5"/>
<dbReference type="GenomeRNAi" id="3202"/>
<dbReference type="Pharos" id="P20719">
    <property type="development level" value="Tbio"/>
</dbReference>
<dbReference type="PRO" id="PR:P20719"/>
<dbReference type="Proteomes" id="UP000005640">
    <property type="component" value="Chromosome 7"/>
</dbReference>
<dbReference type="RNAct" id="P20719">
    <property type="molecule type" value="protein"/>
</dbReference>
<dbReference type="Bgee" id="ENSG00000106004">
    <property type="expression patterns" value="Expressed in adrenal tissue and 147 other cell types or tissues"/>
</dbReference>
<dbReference type="GO" id="GO:0000785">
    <property type="term" value="C:chromatin"/>
    <property type="evidence" value="ECO:0000247"/>
    <property type="project" value="NTNU_SB"/>
</dbReference>
<dbReference type="GO" id="GO:0005634">
    <property type="term" value="C:nucleus"/>
    <property type="evidence" value="ECO:0000314"/>
    <property type="project" value="UniProtKB"/>
</dbReference>
<dbReference type="GO" id="GO:0003677">
    <property type="term" value="F:DNA binding"/>
    <property type="evidence" value="ECO:0000314"/>
    <property type="project" value="UniProtKB"/>
</dbReference>
<dbReference type="GO" id="GO:0001228">
    <property type="term" value="F:DNA-binding transcription activator activity, RNA polymerase II-specific"/>
    <property type="evidence" value="ECO:0000314"/>
    <property type="project" value="NTNU_SB"/>
</dbReference>
<dbReference type="GO" id="GO:0003700">
    <property type="term" value="F:DNA-binding transcription factor activity"/>
    <property type="evidence" value="ECO:0000314"/>
    <property type="project" value="UniProtKB"/>
</dbReference>
<dbReference type="GO" id="GO:0000981">
    <property type="term" value="F:DNA-binding transcription factor activity, RNA polymerase II-specific"/>
    <property type="evidence" value="ECO:0000247"/>
    <property type="project" value="NTNU_SB"/>
</dbReference>
<dbReference type="GO" id="GO:0000978">
    <property type="term" value="F:RNA polymerase II cis-regulatory region sequence-specific DNA binding"/>
    <property type="evidence" value="ECO:0000314"/>
    <property type="project" value="NTNU_SB"/>
</dbReference>
<dbReference type="GO" id="GO:1990837">
    <property type="term" value="F:sequence-specific double-stranded DNA binding"/>
    <property type="evidence" value="ECO:0000314"/>
    <property type="project" value="ARUK-UCL"/>
</dbReference>
<dbReference type="GO" id="GO:0009952">
    <property type="term" value="P:anterior/posterior pattern specification"/>
    <property type="evidence" value="ECO:0000318"/>
    <property type="project" value="GO_Central"/>
</dbReference>
<dbReference type="GO" id="GO:0060435">
    <property type="term" value="P:bronchiole development"/>
    <property type="evidence" value="ECO:0007669"/>
    <property type="project" value="Ensembl"/>
</dbReference>
<dbReference type="GO" id="GO:0016477">
    <property type="term" value="P:cell migration"/>
    <property type="evidence" value="ECO:0007669"/>
    <property type="project" value="Ensembl"/>
</dbReference>
<dbReference type="GO" id="GO:0060764">
    <property type="term" value="P:cell-cell signaling involved in mammary gland development"/>
    <property type="evidence" value="ECO:0007669"/>
    <property type="project" value="Ensembl"/>
</dbReference>
<dbReference type="GO" id="GO:0048704">
    <property type="term" value="P:embryonic skeletal system morphogenesis"/>
    <property type="evidence" value="ECO:0007669"/>
    <property type="project" value="Ensembl"/>
</dbReference>
<dbReference type="GO" id="GO:0060441">
    <property type="term" value="P:epithelial tube branching involved in lung morphogenesis"/>
    <property type="evidence" value="ECO:0007669"/>
    <property type="project" value="Ensembl"/>
</dbReference>
<dbReference type="GO" id="GO:0060574">
    <property type="term" value="P:intestinal epithelial cell maturation"/>
    <property type="evidence" value="ECO:0007669"/>
    <property type="project" value="Ensembl"/>
</dbReference>
<dbReference type="GO" id="GO:0048286">
    <property type="term" value="P:lung alveolus development"/>
    <property type="evidence" value="ECO:0007669"/>
    <property type="project" value="Ensembl"/>
</dbReference>
<dbReference type="GO" id="GO:0060480">
    <property type="term" value="P:lung goblet cell differentiation"/>
    <property type="evidence" value="ECO:0007669"/>
    <property type="project" value="Ensembl"/>
</dbReference>
<dbReference type="GO" id="GO:0060484">
    <property type="term" value="P:lung-associated mesenchyme development"/>
    <property type="evidence" value="ECO:0007669"/>
    <property type="project" value="Ensembl"/>
</dbReference>
<dbReference type="GO" id="GO:0060749">
    <property type="term" value="P:mammary gland alveolus development"/>
    <property type="evidence" value="ECO:0007669"/>
    <property type="project" value="Ensembl"/>
</dbReference>
<dbReference type="GO" id="GO:0060644">
    <property type="term" value="P:mammary gland epithelial cell differentiation"/>
    <property type="evidence" value="ECO:0007669"/>
    <property type="project" value="Ensembl"/>
</dbReference>
<dbReference type="GO" id="GO:0060638">
    <property type="term" value="P:mesenchymal-epithelial cell signaling"/>
    <property type="evidence" value="ECO:0007669"/>
    <property type="project" value="Ensembl"/>
</dbReference>
<dbReference type="GO" id="GO:0035264">
    <property type="term" value="P:multicellular organism growth"/>
    <property type="evidence" value="ECO:0007669"/>
    <property type="project" value="Ensembl"/>
</dbReference>
<dbReference type="GO" id="GO:0016525">
    <property type="term" value="P:negative regulation of angiogenesis"/>
    <property type="evidence" value="ECO:0000315"/>
    <property type="project" value="UniProtKB"/>
</dbReference>
<dbReference type="GO" id="GO:0045647">
    <property type="term" value="P:negative regulation of erythrocyte differentiation"/>
    <property type="evidence" value="ECO:0000314"/>
    <property type="project" value="UniProtKB"/>
</dbReference>
<dbReference type="GO" id="GO:0043065">
    <property type="term" value="P:positive regulation of apoptotic process"/>
    <property type="evidence" value="ECO:0000314"/>
    <property type="project" value="UniProtKB"/>
</dbReference>
<dbReference type="GO" id="GO:0010628">
    <property type="term" value="P:positive regulation of gene expression"/>
    <property type="evidence" value="ECO:0000314"/>
    <property type="project" value="UniProtKB"/>
</dbReference>
<dbReference type="GO" id="GO:0045639">
    <property type="term" value="P:positive regulation of myeloid cell differentiation"/>
    <property type="evidence" value="ECO:0000314"/>
    <property type="project" value="UniProtKB"/>
</dbReference>
<dbReference type="GO" id="GO:0045944">
    <property type="term" value="P:positive regulation of transcription by RNA polymerase II"/>
    <property type="evidence" value="ECO:0000314"/>
    <property type="project" value="UniProtKB"/>
</dbReference>
<dbReference type="GO" id="GO:0033599">
    <property type="term" value="P:regulation of mammary gland epithelial cell proliferation"/>
    <property type="evidence" value="ECO:0007669"/>
    <property type="project" value="Ensembl"/>
</dbReference>
<dbReference type="GO" id="GO:0006357">
    <property type="term" value="P:regulation of transcription by RNA polymerase II"/>
    <property type="evidence" value="ECO:0000318"/>
    <property type="project" value="GO_Central"/>
</dbReference>
<dbReference type="GO" id="GO:0003016">
    <property type="term" value="P:respiratory system process"/>
    <property type="evidence" value="ECO:0007669"/>
    <property type="project" value="Ensembl"/>
</dbReference>
<dbReference type="GO" id="GO:0030878">
    <property type="term" value="P:thyroid gland development"/>
    <property type="evidence" value="ECO:0007669"/>
    <property type="project" value="Ensembl"/>
</dbReference>
<dbReference type="GO" id="GO:0060535">
    <property type="term" value="P:trachea cartilage morphogenesis"/>
    <property type="evidence" value="ECO:0007669"/>
    <property type="project" value="Ensembl"/>
</dbReference>
<dbReference type="CDD" id="cd00086">
    <property type="entry name" value="homeodomain"/>
    <property type="match status" value="1"/>
</dbReference>
<dbReference type="FunFam" id="1.10.10.60:FF:000055">
    <property type="entry name" value="Homeobox protein Hox-A5"/>
    <property type="match status" value="1"/>
</dbReference>
<dbReference type="Gene3D" id="1.10.10.60">
    <property type="entry name" value="Homeodomain-like"/>
    <property type="match status" value="1"/>
</dbReference>
<dbReference type="InterPro" id="IPR050296">
    <property type="entry name" value="Antp_homeobox"/>
</dbReference>
<dbReference type="InterPro" id="IPR001356">
    <property type="entry name" value="HD"/>
</dbReference>
<dbReference type="InterPro" id="IPR020479">
    <property type="entry name" value="HD_metazoa"/>
</dbReference>
<dbReference type="InterPro" id="IPR017995">
    <property type="entry name" value="Homeobox_antennapedia"/>
</dbReference>
<dbReference type="InterPro" id="IPR001827">
    <property type="entry name" value="Homeobox_Antennapedia_CS"/>
</dbReference>
<dbReference type="InterPro" id="IPR017970">
    <property type="entry name" value="Homeobox_CS"/>
</dbReference>
<dbReference type="InterPro" id="IPR009057">
    <property type="entry name" value="Homeodomain-like_sf"/>
</dbReference>
<dbReference type="PANTHER" id="PTHR45659">
    <property type="entry name" value="HOMEOBOX PROTEIN HOX"/>
    <property type="match status" value="1"/>
</dbReference>
<dbReference type="PANTHER" id="PTHR45659:SF10">
    <property type="entry name" value="HOMEOBOX PROTEIN HOX-A5"/>
    <property type="match status" value="1"/>
</dbReference>
<dbReference type="Pfam" id="PF00046">
    <property type="entry name" value="Homeodomain"/>
    <property type="match status" value="1"/>
</dbReference>
<dbReference type="PRINTS" id="PR00025">
    <property type="entry name" value="ANTENNAPEDIA"/>
</dbReference>
<dbReference type="PRINTS" id="PR00024">
    <property type="entry name" value="HOMEOBOX"/>
</dbReference>
<dbReference type="SMART" id="SM00389">
    <property type="entry name" value="HOX"/>
    <property type="match status" value="1"/>
</dbReference>
<dbReference type="SUPFAM" id="SSF46689">
    <property type="entry name" value="Homeodomain-like"/>
    <property type="match status" value="1"/>
</dbReference>
<dbReference type="PROSITE" id="PS00032">
    <property type="entry name" value="ANTENNAPEDIA"/>
    <property type="match status" value="1"/>
</dbReference>
<dbReference type="PROSITE" id="PS00027">
    <property type="entry name" value="HOMEOBOX_1"/>
    <property type="match status" value="1"/>
</dbReference>
<dbReference type="PROSITE" id="PS50071">
    <property type="entry name" value="HOMEOBOX_2"/>
    <property type="match status" value="1"/>
</dbReference>
<reference key="1">
    <citation type="journal article" date="1989" name="Mol. Cell. Biol.">
        <title>Remarkable intron and exon sequence conservation in human and mouse homeobox Hox 1.3 genes.</title>
        <authorList>
            <person name="Tournier-Lasserve E."/>
            <person name="Odenwald W.F."/>
            <person name="Garbern J."/>
            <person name="Trojanowski J."/>
            <person name="Lazzarini R.A."/>
        </authorList>
    </citation>
    <scope>NUCLEOTIDE SEQUENCE [GENOMIC DNA]</scope>
</reference>
<reference key="2">
    <citation type="submission" date="2003-08" db="EMBL/GenBank/DDBJ databases">
        <title>Cloning of human full-length CDSs in BD Creator(TM) system donor vector.</title>
        <authorList>
            <person name="Kalnine N."/>
            <person name="Chen X."/>
            <person name="Rolfs A."/>
            <person name="Halleck A."/>
            <person name="Hines L."/>
            <person name="Eisenstein S."/>
            <person name="Koundinya M."/>
            <person name="Raphael J."/>
            <person name="Moreira D."/>
            <person name="Kelley T."/>
            <person name="LaBaer J."/>
            <person name="Lin Y."/>
            <person name="Phelan M."/>
            <person name="Farmer A."/>
        </authorList>
    </citation>
    <scope>NUCLEOTIDE SEQUENCE [LARGE SCALE MRNA]</scope>
</reference>
<reference key="3">
    <citation type="submission" date="2004-06" db="EMBL/GenBank/DDBJ databases">
        <title>Cloning of human full open reading frames in Gateway(TM) system entry vector (pDONR201).</title>
        <authorList>
            <person name="Halleck A."/>
            <person name="Ebert L."/>
            <person name="Mkoundinya M."/>
            <person name="Schick M."/>
            <person name="Eisenstein S."/>
            <person name="Neubert P."/>
            <person name="Kstrang K."/>
            <person name="Schatten R."/>
            <person name="Shen B."/>
            <person name="Henze S."/>
            <person name="Mar W."/>
            <person name="Korn B."/>
            <person name="Zuo D."/>
            <person name="Hu Y."/>
            <person name="LaBaer J."/>
        </authorList>
    </citation>
    <scope>NUCLEOTIDE SEQUENCE [LARGE SCALE MRNA]</scope>
</reference>
<reference key="4">
    <citation type="journal article" date="2003" name="Science">
        <title>Human chromosome 7: DNA sequence and biology.</title>
        <authorList>
            <person name="Scherer S.W."/>
            <person name="Cheung J."/>
            <person name="MacDonald J.R."/>
            <person name="Osborne L.R."/>
            <person name="Nakabayashi K."/>
            <person name="Herbrick J.-A."/>
            <person name="Carson A.R."/>
            <person name="Parker-Katiraee L."/>
            <person name="Skaug J."/>
            <person name="Khaja R."/>
            <person name="Zhang J."/>
            <person name="Hudek A.K."/>
            <person name="Li M."/>
            <person name="Haddad M."/>
            <person name="Duggan G.E."/>
            <person name="Fernandez B.A."/>
            <person name="Kanematsu E."/>
            <person name="Gentles S."/>
            <person name="Christopoulos C.C."/>
            <person name="Choufani S."/>
            <person name="Kwasnicka D."/>
            <person name="Zheng X.H."/>
            <person name="Lai Z."/>
            <person name="Nusskern D.R."/>
            <person name="Zhang Q."/>
            <person name="Gu Z."/>
            <person name="Lu F."/>
            <person name="Zeesman S."/>
            <person name="Nowaczyk M.J."/>
            <person name="Teshima I."/>
            <person name="Chitayat D."/>
            <person name="Shuman C."/>
            <person name="Weksberg R."/>
            <person name="Zackai E.H."/>
            <person name="Grebe T.A."/>
            <person name="Cox S.R."/>
            <person name="Kirkpatrick S.J."/>
            <person name="Rahman N."/>
            <person name="Friedman J.M."/>
            <person name="Heng H.H.Q."/>
            <person name="Pelicci P.G."/>
            <person name="Lo-Coco F."/>
            <person name="Belloni E."/>
            <person name="Shaffer L.G."/>
            <person name="Pober B."/>
            <person name="Morton C.C."/>
            <person name="Gusella J.F."/>
            <person name="Bruns G.A.P."/>
            <person name="Korf B.R."/>
            <person name="Quade B.J."/>
            <person name="Ligon A.H."/>
            <person name="Ferguson H."/>
            <person name="Higgins A.W."/>
            <person name="Leach N.T."/>
            <person name="Herrick S.R."/>
            <person name="Lemyre E."/>
            <person name="Farra C.G."/>
            <person name="Kim H.-G."/>
            <person name="Summers A.M."/>
            <person name="Gripp K.W."/>
            <person name="Roberts W."/>
            <person name="Szatmari P."/>
            <person name="Winsor E.J.T."/>
            <person name="Grzeschik K.-H."/>
            <person name="Teebi A."/>
            <person name="Minassian B.A."/>
            <person name="Kere J."/>
            <person name="Armengol L."/>
            <person name="Pujana M.A."/>
            <person name="Estivill X."/>
            <person name="Wilson M.D."/>
            <person name="Koop B.F."/>
            <person name="Tosi S."/>
            <person name="Moore G.E."/>
            <person name="Boright A.P."/>
            <person name="Zlotorynski E."/>
            <person name="Kerem B."/>
            <person name="Kroisel P.M."/>
            <person name="Petek E."/>
            <person name="Oscier D.G."/>
            <person name="Mould S.J."/>
            <person name="Doehner H."/>
            <person name="Doehner K."/>
            <person name="Rommens J.M."/>
            <person name="Vincent J.B."/>
            <person name="Venter J.C."/>
            <person name="Li P.W."/>
            <person name="Mural R.J."/>
            <person name="Adams M.D."/>
            <person name="Tsui L.-C."/>
        </authorList>
    </citation>
    <scope>NUCLEOTIDE SEQUENCE [LARGE SCALE GENOMIC DNA]</scope>
</reference>
<reference key="5">
    <citation type="submission" date="2005-07" db="EMBL/GenBank/DDBJ databases">
        <authorList>
            <person name="Mural R.J."/>
            <person name="Istrail S."/>
            <person name="Sutton G.G."/>
            <person name="Florea L."/>
            <person name="Halpern A.L."/>
            <person name="Mobarry C.M."/>
            <person name="Lippert R."/>
            <person name="Walenz B."/>
            <person name="Shatkay H."/>
            <person name="Dew I."/>
            <person name="Miller J.R."/>
            <person name="Flanigan M.J."/>
            <person name="Edwards N.J."/>
            <person name="Bolanos R."/>
            <person name="Fasulo D."/>
            <person name="Halldorsson B.V."/>
            <person name="Hannenhalli S."/>
            <person name="Turner R."/>
            <person name="Yooseph S."/>
            <person name="Lu F."/>
            <person name="Nusskern D.R."/>
            <person name="Shue B.C."/>
            <person name="Zheng X.H."/>
            <person name="Zhong F."/>
            <person name="Delcher A.L."/>
            <person name="Huson D.H."/>
            <person name="Kravitz S.A."/>
            <person name="Mouchard L."/>
            <person name="Reinert K."/>
            <person name="Remington K.A."/>
            <person name="Clark A.G."/>
            <person name="Waterman M.S."/>
            <person name="Eichler E.E."/>
            <person name="Adams M.D."/>
            <person name="Hunkapiller M.W."/>
            <person name="Myers E.W."/>
            <person name="Venter J.C."/>
        </authorList>
    </citation>
    <scope>NUCLEOTIDE SEQUENCE [LARGE SCALE GENOMIC DNA]</scope>
</reference>
<reference key="6">
    <citation type="journal article" date="2003" name="Nature">
        <title>The DNA sequence of human chromosome 7.</title>
        <authorList>
            <person name="Hillier L.W."/>
            <person name="Fulton R.S."/>
            <person name="Fulton L.A."/>
            <person name="Graves T.A."/>
            <person name="Pepin K.H."/>
            <person name="Wagner-McPherson C."/>
            <person name="Layman D."/>
            <person name="Maas J."/>
            <person name="Jaeger S."/>
            <person name="Walker R."/>
            <person name="Wylie K."/>
            <person name="Sekhon M."/>
            <person name="Becker M.C."/>
            <person name="O'Laughlin M.D."/>
            <person name="Schaller M.E."/>
            <person name="Fewell G.A."/>
            <person name="Delehaunty K.D."/>
            <person name="Miner T.L."/>
            <person name="Nash W.E."/>
            <person name="Cordes M."/>
            <person name="Du H."/>
            <person name="Sun H."/>
            <person name="Edwards J."/>
            <person name="Bradshaw-Cordum H."/>
            <person name="Ali J."/>
            <person name="Andrews S."/>
            <person name="Isak A."/>
            <person name="Vanbrunt A."/>
            <person name="Nguyen C."/>
            <person name="Du F."/>
            <person name="Lamar B."/>
            <person name="Courtney L."/>
            <person name="Kalicki J."/>
            <person name="Ozersky P."/>
            <person name="Bielicki L."/>
            <person name="Scott K."/>
            <person name="Holmes A."/>
            <person name="Harkins R."/>
            <person name="Harris A."/>
            <person name="Strong C.M."/>
            <person name="Hou S."/>
            <person name="Tomlinson C."/>
            <person name="Dauphin-Kohlberg S."/>
            <person name="Kozlowicz-Reilly A."/>
            <person name="Leonard S."/>
            <person name="Rohlfing T."/>
            <person name="Rock S.M."/>
            <person name="Tin-Wollam A.-M."/>
            <person name="Abbott A."/>
            <person name="Minx P."/>
            <person name="Maupin R."/>
            <person name="Strowmatt C."/>
            <person name="Latreille P."/>
            <person name="Miller N."/>
            <person name="Johnson D."/>
            <person name="Murray J."/>
            <person name="Woessner J.P."/>
            <person name="Wendl M.C."/>
            <person name="Yang S.-P."/>
            <person name="Schultz B.R."/>
            <person name="Wallis J.W."/>
            <person name="Spieth J."/>
            <person name="Bieri T.A."/>
            <person name="Nelson J.O."/>
            <person name="Berkowicz N."/>
            <person name="Wohldmann P.E."/>
            <person name="Cook L.L."/>
            <person name="Hickenbotham M.T."/>
            <person name="Eldred J."/>
            <person name="Williams D."/>
            <person name="Bedell J.A."/>
            <person name="Mardis E.R."/>
            <person name="Clifton S.W."/>
            <person name="Chissoe S.L."/>
            <person name="Marra M.A."/>
            <person name="Raymond C."/>
            <person name="Haugen E."/>
            <person name="Gillett W."/>
            <person name="Zhou Y."/>
            <person name="James R."/>
            <person name="Phelps K."/>
            <person name="Iadanoto S."/>
            <person name="Bubb K."/>
            <person name="Simms E."/>
            <person name="Levy R."/>
            <person name="Clendenning J."/>
            <person name="Kaul R."/>
            <person name="Kent W.J."/>
            <person name="Furey T.S."/>
            <person name="Baertsch R.A."/>
            <person name="Brent M.R."/>
            <person name="Keibler E."/>
            <person name="Flicek P."/>
            <person name="Bork P."/>
            <person name="Suyama M."/>
            <person name="Bailey J.A."/>
            <person name="Portnoy M.E."/>
            <person name="Torrents D."/>
            <person name="Chinwalla A.T."/>
            <person name="Gish W.R."/>
            <person name="Eddy S.R."/>
            <person name="McPherson J.D."/>
            <person name="Olson M.V."/>
            <person name="Eichler E.E."/>
            <person name="Green E.D."/>
            <person name="Waterston R.H."/>
            <person name="Wilson R.K."/>
        </authorList>
    </citation>
    <scope>NUCLEOTIDE SEQUENCE [LARGE SCALE GENOMIC DNA]</scope>
</reference>
<reference key="7">
    <citation type="journal article" date="2004" name="Genome Res.">
        <title>The status, quality, and expansion of the NIH full-length cDNA project: the Mammalian Gene Collection (MGC).</title>
        <authorList>
            <consortium name="The MGC Project Team"/>
        </authorList>
    </citation>
    <scope>NUCLEOTIDE SEQUENCE [LARGE SCALE MRNA]</scope>
    <source>
        <tissue>Ovary</tissue>
    </source>
</reference>
<reference key="8">
    <citation type="journal article" date="1989" name="Genome">
        <title>Organization of human class I homeobox genes.</title>
        <authorList>
            <person name="Boncinelli E."/>
            <person name="Acampora D."/>
            <person name="Pannese M."/>
            <person name="D'Esposito M."/>
            <person name="Somma R."/>
            <person name="Gaudino G."/>
            <person name="Stornaiuolo A."/>
            <person name="Cafiero M."/>
            <person name="Faiella A."/>
            <person name="Simeone A."/>
        </authorList>
    </citation>
    <scope>NUCLEOTIDE SEQUENCE [GENOMIC DNA] OF 195-260</scope>
</reference>
<reference key="9">
    <citation type="journal article" date="1995" name="Mol. Cell. Biol.">
        <title>Both Pbx1 and E2A-Pbx1 bind the DNA motif ATCAATCAA cooperatively with the products of multiple murine Hox genes, some of which are themselves oncogenes.</title>
        <authorList>
            <person name="Lu Q."/>
            <person name="Knoepfler P.S."/>
            <person name="Scheele J."/>
            <person name="Wright D.D."/>
            <person name="Kamps M.P."/>
        </authorList>
    </citation>
    <scope>INTERACTION WITH PBX1</scope>
</reference>
<reference key="10">
    <citation type="journal article" date="1997" name="Oncogene">
        <title>The highest affinity DNA element bound by Pbx complexes in t(1;19) leukemic cells fails to mediate cooperative DNA-binding or cooperative transactivation by E2a-Pbx1 and class I Hox proteins - evidence for selective targetting of E2a-Pbx1 to a subset of Pbx-recognition elements.</title>
        <authorList>
            <person name="Knoepfler P.S."/>
            <person name="Kamps M.P."/>
        </authorList>
    </citation>
    <scope>INTERACTION WITH PBX1</scope>
</reference>
<reference key="11">
    <citation type="journal article" date="2008" name="Proc. Natl. Acad. Sci. U.S.A.">
        <title>A quantitative atlas of mitotic phosphorylation.</title>
        <authorList>
            <person name="Dephoure N."/>
            <person name="Zhou C."/>
            <person name="Villen J."/>
            <person name="Beausoleil S.A."/>
            <person name="Bakalarski C.E."/>
            <person name="Elledge S.J."/>
            <person name="Gygi S.P."/>
        </authorList>
    </citation>
    <scope>IDENTIFICATION BY MASS SPECTROMETRY [LARGE SCALE ANALYSIS]</scope>
    <source>
        <tissue>Cervix carcinoma</tissue>
    </source>
</reference>
<proteinExistence type="evidence at protein level"/>
<protein>
    <recommendedName>
        <fullName>Homeobox protein Hox-A5</fullName>
    </recommendedName>
    <alternativeName>
        <fullName>Homeobox protein Hox-1C</fullName>
    </alternativeName>
</protein>
<comment type="function">
    <text>Sequence-specific transcription factor which is part of a developmental regulatory system that provides cells with specific positional identities on the anterior-posterior axis. Also binds to its own promoter. Binds specifically to the motif 5'-CYYNATTA[TG]Y-3'.</text>
</comment>
<comment type="subunit">
    <text evidence="3 4">Forms a DNA-binding heterodimer with transcription factor PBX1.</text>
</comment>
<comment type="interaction">
    <interactant intactId="EBI-8470697">
        <id>P20719</id>
    </interactant>
    <interactant intactId="EBI-21535880">
        <id>Q92870-2</id>
        <label>APBB2</label>
    </interactant>
    <organismsDiffer>false</organismsDiffer>
    <experiments>3</experiments>
</comment>
<comment type="interaction">
    <interactant intactId="EBI-8470697">
        <id>P20719</id>
    </interactant>
    <interactant intactId="EBI-10171902">
        <id>P56545-3</id>
        <label>CTBP2</label>
    </interactant>
    <organismsDiffer>false</organismsDiffer>
    <experiments>5</experiments>
</comment>
<comment type="interaction">
    <interactant intactId="EBI-8470697">
        <id>P20719</id>
    </interactant>
    <interactant intactId="EBI-739789">
        <id>Q92997</id>
        <label>DVL3</label>
    </interactant>
    <organismsDiffer>false</organismsDiffer>
    <experiments>3</experiments>
</comment>
<comment type="interaction">
    <interactant intactId="EBI-8470697">
        <id>P20719</id>
    </interactant>
    <interactant intactId="EBI-466029">
        <id>P42858</id>
        <label>HTT</label>
    </interactant>
    <organismsDiffer>false</organismsDiffer>
    <experiments>9</experiments>
</comment>
<comment type="interaction">
    <interactant intactId="EBI-8470697">
        <id>P20719</id>
    </interactant>
    <interactant intactId="EBI-348489">
        <id>P40425</id>
        <label>PBX2</label>
    </interactant>
    <organismsDiffer>false</organismsDiffer>
    <experiments>5</experiments>
</comment>
<comment type="interaction">
    <interactant intactId="EBI-8470697">
        <id>P20719</id>
    </interactant>
    <interactant intactId="EBI-79165">
        <id>Q9NRD5</id>
        <label>PICK1</label>
    </interactant>
    <organismsDiffer>false</organismsDiffer>
    <experiments>3</experiments>
</comment>
<comment type="subcellular location">
    <subcellularLocation>
        <location>Nucleus</location>
    </subcellularLocation>
</comment>
<comment type="developmental stage">
    <text>Expressed during embryogenesis and in adult kidney.</text>
</comment>
<comment type="similarity">
    <text evidence="5">Belongs to the Antp homeobox family.</text>
</comment>
<gene>
    <name type="primary">HOXA5</name>
    <name type="synonym">HOX1C</name>
</gene>
<organism>
    <name type="scientific">Homo sapiens</name>
    <name type="common">Human</name>
    <dbReference type="NCBI Taxonomy" id="9606"/>
    <lineage>
        <taxon>Eukaryota</taxon>
        <taxon>Metazoa</taxon>
        <taxon>Chordata</taxon>
        <taxon>Craniata</taxon>
        <taxon>Vertebrata</taxon>
        <taxon>Euteleostomi</taxon>
        <taxon>Mammalia</taxon>
        <taxon>Eutheria</taxon>
        <taxon>Euarchontoglires</taxon>
        <taxon>Primates</taxon>
        <taxon>Haplorrhini</taxon>
        <taxon>Catarrhini</taxon>
        <taxon>Hominidae</taxon>
        <taxon>Homo</taxon>
    </lineage>
</organism>
<keyword id="KW-0217">Developmental protein</keyword>
<keyword id="KW-0238">DNA-binding</keyword>
<keyword id="KW-0371">Homeobox</keyword>
<keyword id="KW-0539">Nucleus</keyword>
<keyword id="KW-1267">Proteomics identification</keyword>
<keyword id="KW-1185">Reference proteome</keyword>
<keyword id="KW-0804">Transcription</keyword>
<keyword id="KW-0805">Transcription regulation</keyword>
<accession>P20719</accession>
<accession>A4D179</accession>
<accession>O43367</accession>
<accession>Q96CY6</accession>
<evidence type="ECO:0000255" key="1">
    <source>
        <dbReference type="PROSITE-ProRule" id="PRU00108"/>
    </source>
</evidence>
<evidence type="ECO:0000256" key="2">
    <source>
        <dbReference type="SAM" id="MobiDB-lite"/>
    </source>
</evidence>
<evidence type="ECO:0000269" key="3">
    <source>
    </source>
</evidence>
<evidence type="ECO:0000269" key="4">
    <source>
    </source>
</evidence>
<evidence type="ECO:0000305" key="5"/>
<feature type="chain" id="PRO_0000200057" description="Homeobox protein Hox-A5">
    <location>
        <begin position="1"/>
        <end position="270"/>
    </location>
</feature>
<feature type="DNA-binding region" description="Homeobox" evidence="1">
    <location>
        <begin position="195"/>
        <end position="254"/>
    </location>
</feature>
<feature type="region of interest" description="Disordered" evidence="2">
    <location>
        <begin position="75"/>
        <end position="175"/>
    </location>
</feature>
<feature type="short sequence motif" description="Antp-type hexapeptide">
    <location>
        <begin position="176"/>
        <end position="181"/>
    </location>
</feature>
<feature type="compositionally biased region" description="Low complexity" evidence="2">
    <location>
        <begin position="75"/>
        <end position="87"/>
    </location>
</feature>
<feature type="compositionally biased region" description="Low complexity" evidence="2">
    <location>
        <begin position="119"/>
        <end position="134"/>
    </location>
</feature>
<feature type="compositionally biased region" description="Low complexity" evidence="2">
    <location>
        <begin position="154"/>
        <end position="166"/>
    </location>
</feature>
<feature type="sequence conflict" description="In Ref. 1; AAA58663." evidence="5" ref="1">
    <original>S</original>
    <variation>T</variation>
    <location>
        <position position="114"/>
    </location>
</feature>
<sequence>MSSYFVNSFCGRYPNGPDYQLHNYGDHSSVSEQFRDSASMHSGRYGYGYNGMDLSVGRSGSGHFGSGERARSYAASASAAPAEPRYSQPATSTHSPQPDPLPCSAVAPSPGSDSHHGGKNSLSNSSGASADAGSTHISSREGVGTASGAEEDAPASSEQASAQSEPSPAPPAQPQIYPWMRKLHISHDNIGGPEGKRARTAYTRYQTLELEKEFHFNRYLTRRRRIEIAHALCLSERQIKIWFQNRRMKWKKDNKLKSMSMAAAGGAFRP</sequence>
<name>HXA5_HUMAN</name>